<accession>C9D7R2</accession>
<protein>
    <recommendedName>
        <fullName>Astacin-like metalloprotease toxin 2</fullName>
        <ecNumber>3.4.24.-</ecNumber>
    </recommendedName>
    <alternativeName>
        <fullName>Loxosceles astacin-like protease 2</fullName>
        <shortName>LALP2</shortName>
    </alternativeName>
</protein>
<sequence>MIPDVGFLVLLTGALFICIKAAPATTDVDPTFEGRIVMEGDILIREEQLTERNAIALENMRWPDATIVYKLTGWYALFPGDIKKAMRHIEENTCIKFKARSNEEGYVKIYKGEKESCFADIGYFASEQRLSLGSGCKIFGRILHEMGHTIGLFHEHTRPDRDNYITVHEDNIRPGSKRNYRKTPSYMTRVIGPFDYDSIMIYGETAGSRDPMHLKSMEANKPGVTLISSRYKDRLTDLDIKKINTLYNCPGKEKFS</sequence>
<comment type="function">
    <text evidence="1">Zinc metalloprotease. Provoques deadhesion of endothelial cells from cell cultures, and also degradation of fibronectin, fibrinogen and gelatin in vitro. Its role in the venom is not fully understood but it might act as a spreading factor that facilitates diffusion of other venom toxins. Alternatively, it might be involved in the proteolytic processing of other venom toxins or it might play a role in extra-oral digestion of prey (By similarity).</text>
</comment>
<comment type="cofactor">
    <cofactor evidence="3">
        <name>Zn(2+)</name>
        <dbReference type="ChEBI" id="CHEBI:29105"/>
    </cofactor>
    <text evidence="3">Binds 1 zinc ion per subunit.</text>
</comment>
<comment type="activity regulation">
    <text evidence="1">Inhibited by 1,10-phenanthroline.</text>
</comment>
<comment type="subunit">
    <text evidence="1">Monomer.</text>
</comment>
<comment type="subcellular location">
    <subcellularLocation>
        <location evidence="1">Secreted</location>
    </subcellularLocation>
</comment>
<comment type="tissue specificity">
    <text>Expressed by the venom gland.</text>
</comment>
<keyword id="KW-1015">Disulfide bond</keyword>
<keyword id="KW-0378">Hydrolase</keyword>
<keyword id="KW-0479">Metal-binding</keyword>
<keyword id="KW-0482">Metalloprotease</keyword>
<keyword id="KW-0645">Protease</keyword>
<keyword id="KW-0964">Secreted</keyword>
<keyword id="KW-0732">Signal</keyword>
<keyword id="KW-0800">Toxin</keyword>
<keyword id="KW-0862">Zinc</keyword>
<name>VMPA2_LOXIN</name>
<dbReference type="EC" id="3.4.24.-"/>
<dbReference type="EMBL" id="GQ227490">
    <property type="protein sequence ID" value="ACV52010.1"/>
    <property type="molecule type" value="mRNA"/>
</dbReference>
<dbReference type="SMR" id="C9D7R2"/>
<dbReference type="GO" id="GO:0005576">
    <property type="term" value="C:extracellular region"/>
    <property type="evidence" value="ECO:0007669"/>
    <property type="project" value="UniProtKB-SubCell"/>
</dbReference>
<dbReference type="GO" id="GO:0004222">
    <property type="term" value="F:metalloendopeptidase activity"/>
    <property type="evidence" value="ECO:0007669"/>
    <property type="project" value="InterPro"/>
</dbReference>
<dbReference type="GO" id="GO:0090729">
    <property type="term" value="F:toxin activity"/>
    <property type="evidence" value="ECO:0007669"/>
    <property type="project" value="UniProtKB-KW"/>
</dbReference>
<dbReference type="GO" id="GO:0008270">
    <property type="term" value="F:zinc ion binding"/>
    <property type="evidence" value="ECO:0007669"/>
    <property type="project" value="InterPro"/>
</dbReference>
<dbReference type="GO" id="GO:0006508">
    <property type="term" value="P:proteolysis"/>
    <property type="evidence" value="ECO:0007669"/>
    <property type="project" value="UniProtKB-KW"/>
</dbReference>
<dbReference type="CDD" id="cd04280">
    <property type="entry name" value="ZnMc_astacin_like"/>
    <property type="match status" value="1"/>
</dbReference>
<dbReference type="Gene3D" id="3.40.390.10">
    <property type="entry name" value="Collagenase (Catalytic Domain)"/>
    <property type="match status" value="1"/>
</dbReference>
<dbReference type="InterPro" id="IPR034035">
    <property type="entry name" value="Astacin-like_dom"/>
</dbReference>
<dbReference type="InterPro" id="IPR024079">
    <property type="entry name" value="MetalloPept_cat_dom_sf"/>
</dbReference>
<dbReference type="InterPro" id="IPR001506">
    <property type="entry name" value="Peptidase_M12A"/>
</dbReference>
<dbReference type="InterPro" id="IPR006026">
    <property type="entry name" value="Peptidase_Metallo"/>
</dbReference>
<dbReference type="PANTHER" id="PTHR10127">
    <property type="entry name" value="DISCOIDIN, CUB, EGF, LAMININ , AND ZINC METALLOPROTEASE DOMAIN CONTAINING"/>
    <property type="match status" value="1"/>
</dbReference>
<dbReference type="PANTHER" id="PTHR10127:SF780">
    <property type="entry name" value="METALLOENDOPEPTIDASE"/>
    <property type="match status" value="1"/>
</dbReference>
<dbReference type="Pfam" id="PF01400">
    <property type="entry name" value="Astacin"/>
    <property type="match status" value="1"/>
</dbReference>
<dbReference type="PRINTS" id="PR00480">
    <property type="entry name" value="ASTACIN"/>
</dbReference>
<dbReference type="SMART" id="SM00235">
    <property type="entry name" value="ZnMc"/>
    <property type="match status" value="1"/>
</dbReference>
<dbReference type="SUPFAM" id="SSF55486">
    <property type="entry name" value="Metalloproteases ('zincins'), catalytic domain"/>
    <property type="match status" value="1"/>
</dbReference>
<dbReference type="PROSITE" id="PS51864">
    <property type="entry name" value="ASTACIN"/>
    <property type="match status" value="1"/>
</dbReference>
<organism>
    <name type="scientific">Loxosceles intermedia</name>
    <name type="common">Brown spider</name>
    <dbReference type="NCBI Taxonomy" id="58218"/>
    <lineage>
        <taxon>Eukaryota</taxon>
        <taxon>Metazoa</taxon>
        <taxon>Ecdysozoa</taxon>
        <taxon>Arthropoda</taxon>
        <taxon>Chelicerata</taxon>
        <taxon>Arachnida</taxon>
        <taxon>Araneae</taxon>
        <taxon>Araneomorphae</taxon>
        <taxon>Haplogynae</taxon>
        <taxon>Scytodoidea</taxon>
        <taxon>Sicariidae</taxon>
        <taxon>Loxosceles</taxon>
    </lineage>
</organism>
<evidence type="ECO:0000250" key="1"/>
<evidence type="ECO:0000255" key="2"/>
<evidence type="ECO:0000255" key="3">
    <source>
        <dbReference type="PROSITE-ProRule" id="PRU01211"/>
    </source>
</evidence>
<feature type="signal peptide" evidence="2">
    <location>
        <begin position="1"/>
        <end position="24"/>
    </location>
</feature>
<feature type="propeptide" id="PRO_5000522737" evidence="2">
    <location>
        <begin position="25"/>
        <end position="52"/>
    </location>
</feature>
<feature type="chain" id="PRO_5000522738" description="Astacin-like metalloprotease toxin 2">
    <location>
        <begin position="53"/>
        <end position="256"/>
    </location>
</feature>
<feature type="domain" description="Peptidase M12A" evidence="3">
    <location>
        <begin position="53"/>
        <end position="250"/>
    </location>
</feature>
<feature type="active site" evidence="3">
    <location>
        <position position="145"/>
    </location>
</feature>
<feature type="binding site" evidence="3">
    <location>
        <position position="144"/>
    </location>
    <ligand>
        <name>Zn(2+)</name>
        <dbReference type="ChEBI" id="CHEBI:29105"/>
        <note>catalytic</note>
    </ligand>
</feature>
<feature type="binding site" evidence="3">
    <location>
        <position position="148"/>
    </location>
    <ligand>
        <name>Zn(2+)</name>
        <dbReference type="ChEBI" id="CHEBI:29105"/>
        <note>catalytic</note>
    </ligand>
</feature>
<feature type="binding site" evidence="3">
    <location>
        <position position="154"/>
    </location>
    <ligand>
        <name>Zn(2+)</name>
        <dbReference type="ChEBI" id="CHEBI:29105"/>
        <note>catalytic</note>
    </ligand>
</feature>
<feature type="disulfide bond" evidence="3">
    <location>
        <begin position="94"/>
        <end position="249"/>
    </location>
</feature>
<feature type="disulfide bond" evidence="3">
    <location>
        <begin position="117"/>
        <end position="136"/>
    </location>
</feature>
<proteinExistence type="evidence at transcript level"/>
<reference key="1">
    <citation type="journal article" date="2010" name="Biochimie">
        <title>Astacin-like metalloproteases are a gene family of toxins present in the venom of different species of the brown spider (genus Loxosceles).</title>
        <authorList>
            <person name="Trevisan-Silva D."/>
            <person name="Gremski L.H."/>
            <person name="Chaim O.M."/>
            <person name="da Silveira R.B."/>
            <person name="Meissner G.O."/>
            <person name="Mangili O.C."/>
            <person name="Barbaro K.C."/>
            <person name="Gremski W."/>
            <person name="Veiga S.S."/>
            <person name="Senff-Ribeiro A."/>
        </authorList>
    </citation>
    <scope>NUCLEOTIDE SEQUENCE [MRNA]</scope>
    <source>
        <tissue>Venom gland</tissue>
    </source>
</reference>